<accession>P0CQ22</accession>
<accession>Q55VJ3</accession>
<accession>Q5KKP5</accession>
<comment type="function">
    <text evidence="1">Component of the FACT complex, a general chromatin factor that acts to reorganize nucleosomes. The FACT complex is involved in multiple processes that require DNA as a template such as mRNA elongation, DNA replication and DNA repair. During transcription elongation the FACT complex acts as a histone chaperone that both destabilizes and restores nucleosomal structure. It facilitates the passage of RNA polymerase II and transcription by promoting the dissociation of one histone H2A-H2B dimer from the nucleosome, then subsequently promotes the reestablishment of the nucleosome following the passage of RNA polymerase II (By similarity).</text>
</comment>
<comment type="subunit">
    <text evidence="1">Forms a stable heterodimer with POB3. The SPT16-POB3 dimer weakly associates with multiple molecules of NHP6 to form the FACT complex (By similarity).</text>
</comment>
<comment type="subcellular location">
    <subcellularLocation>
        <location evidence="1">Nucleus</location>
    </subcellularLocation>
    <subcellularLocation>
        <location evidence="1">Chromosome</location>
    </subcellularLocation>
</comment>
<comment type="similarity">
    <text evidence="4">Belongs to the peptidase M24 family. SPT16 subfamily.</text>
</comment>
<comment type="caution">
    <text evidence="4">Although related to the peptidase M24 family, this protein lacks conserved active site residues suggesting that it may lack peptidase activity.</text>
</comment>
<keyword id="KW-0158">Chromosome</keyword>
<keyword id="KW-0175">Coiled coil</keyword>
<keyword id="KW-0227">DNA damage</keyword>
<keyword id="KW-0234">DNA repair</keyword>
<keyword id="KW-0235">DNA replication</keyword>
<keyword id="KW-0539">Nucleus</keyword>
<keyword id="KW-1185">Reference proteome</keyword>
<keyword id="KW-0804">Transcription</keyword>
<keyword id="KW-0805">Transcription regulation</keyword>
<organism>
    <name type="scientific">Cryptococcus neoformans var. neoformans serotype D (strain JEC21 / ATCC MYA-565)</name>
    <name type="common">Filobasidiella neoformans</name>
    <dbReference type="NCBI Taxonomy" id="214684"/>
    <lineage>
        <taxon>Eukaryota</taxon>
        <taxon>Fungi</taxon>
        <taxon>Dikarya</taxon>
        <taxon>Basidiomycota</taxon>
        <taxon>Agaricomycotina</taxon>
        <taxon>Tremellomycetes</taxon>
        <taxon>Tremellales</taxon>
        <taxon>Cryptococcaceae</taxon>
        <taxon>Cryptococcus</taxon>
        <taxon>Cryptococcus neoformans species complex</taxon>
    </lineage>
</organism>
<reference key="1">
    <citation type="journal article" date="2005" name="Science">
        <title>The genome of the basidiomycetous yeast and human pathogen Cryptococcus neoformans.</title>
        <authorList>
            <person name="Loftus B.J."/>
            <person name="Fung E."/>
            <person name="Roncaglia P."/>
            <person name="Rowley D."/>
            <person name="Amedeo P."/>
            <person name="Bruno D."/>
            <person name="Vamathevan J."/>
            <person name="Miranda M."/>
            <person name="Anderson I.J."/>
            <person name="Fraser J.A."/>
            <person name="Allen J.E."/>
            <person name="Bosdet I.E."/>
            <person name="Brent M.R."/>
            <person name="Chiu R."/>
            <person name="Doering T.L."/>
            <person name="Donlin M.J."/>
            <person name="D'Souza C.A."/>
            <person name="Fox D.S."/>
            <person name="Grinberg V."/>
            <person name="Fu J."/>
            <person name="Fukushima M."/>
            <person name="Haas B.J."/>
            <person name="Huang J.C."/>
            <person name="Janbon G."/>
            <person name="Jones S.J.M."/>
            <person name="Koo H.L."/>
            <person name="Krzywinski M.I."/>
            <person name="Kwon-Chung K.J."/>
            <person name="Lengeler K.B."/>
            <person name="Maiti R."/>
            <person name="Marra M.A."/>
            <person name="Marra R.E."/>
            <person name="Mathewson C.A."/>
            <person name="Mitchell T.G."/>
            <person name="Pertea M."/>
            <person name="Riggs F.R."/>
            <person name="Salzberg S.L."/>
            <person name="Schein J.E."/>
            <person name="Shvartsbeyn A."/>
            <person name="Shin H."/>
            <person name="Shumway M."/>
            <person name="Specht C.A."/>
            <person name="Suh B.B."/>
            <person name="Tenney A."/>
            <person name="Utterback T.R."/>
            <person name="Wickes B.L."/>
            <person name="Wortman J.R."/>
            <person name="Wye N.H."/>
            <person name="Kronstad J.W."/>
            <person name="Lodge J.K."/>
            <person name="Heitman J."/>
            <person name="Davis R.W."/>
            <person name="Fraser C.M."/>
            <person name="Hyman R.W."/>
        </authorList>
    </citation>
    <scope>NUCLEOTIDE SEQUENCE [LARGE SCALE GENOMIC DNA]</scope>
    <source>
        <strain>JEC21 / ATCC MYA-565</strain>
    </source>
</reference>
<evidence type="ECO:0000250" key="1"/>
<evidence type="ECO:0000255" key="2"/>
<evidence type="ECO:0000256" key="3">
    <source>
        <dbReference type="SAM" id="MobiDB-lite"/>
    </source>
</evidence>
<evidence type="ECO:0000305" key="4"/>
<gene>
    <name type="primary">SPT16</name>
    <name type="ordered locus">CNC02310</name>
</gene>
<proteinExistence type="inferred from homology"/>
<protein>
    <recommendedName>
        <fullName>FACT complex subunit SPT16</fullName>
    </recommendedName>
    <alternativeName>
        <fullName>Facilitates chromatin transcription complex subunit SPT16</fullName>
    </alternativeName>
</protein>
<sequence length="1035" mass="115812">MSDIRLDSATFFKRAAKIFDSWEKPSGDTQALEDINSIAIILGDPNDEVASYTKTTALQLWLLGYEFPSTLMVFEKSPRKVTFVCGSSKAKLIRQLQPSDGIEIDVKVRSKDATAAKETMEEVVASLNGKFGSLPKDRPIGKLVDEWNSAVESKGDLEVVDVAIPISAVLAEKDGEELKTIITSAKLTSTVMINYFKSKMESIIDRGTKMSHEALAQLVEEKIGNEEKGPDMKLWNKNPSLGEIDFASSEFVYSPVIQSGGKYDLKVTAASNNDNLKPGIILANMGIRYKNYCSNMGRTFLISPSKKQETQYTTLLEVRKEALALLKTGAVASDVYNSVHQSLETKNATLADSFLKNLGFATGMEYRDSSFLLNAKNNRELKENMVLVLTIGVADLPDAKNKGKTYSLLLSDTVKIGQNGAVVLTEGCTRLSDVVMDMEEEEEEDVKPQIDKKPKINNSPKKPRSSTVGGRVLNAKTRGANREQATQTTAEKIKTNQQRLHAQLNADGVKRWEADAGGKNGAQQKVVKRYESYRREEQLPRAVEDRRIYVDEQRQSVVLPINGYAVPYHISTIKNVTKTEESNHMVLRINFQSPGQIAGKKEDMPFEDPDANFIRSVSFRSQDQRHMLKVYEAITALKKAAVKRETERKELADVIEQEKLIEVKGRHPYVLKNVFPRPGPEGKKTDGNVEIHQNGIRFRPDGPASKIDILFSNIKHLFFQPSEKELIVIIHVHLKAPIMLGKKKTSDVQFYREVADMSFDETGGKKRRARYGDEDEIEQEQEDRKRRAELDKLFHDFARRIETAAQAQQFELEVDVPFRELGFNGVPHKSIVALLPTTNCLIHISELPFTVITLSEVEIVHLERVQFGLKNFDMVFVLQDLKKPPVHINSIPVAHLDNVKEWLDSCDVPISEGPVNLSWPAIMKTVNEDPHAFYAEGGWNFLTGSGSDDGSEESEEGSEFEGDSDVFDESSGSDEDSESAFEGDSDSASAESLSDEGEDWDELERKAKRADEKHRTDRGGDSDDDGKKKKKGSRR</sequence>
<feature type="chain" id="PRO_0000245183" description="FACT complex subunit SPT16">
    <location>
        <begin position="1"/>
        <end position="1035"/>
    </location>
</feature>
<feature type="region of interest" description="Disordered" evidence="3">
    <location>
        <begin position="440"/>
        <end position="471"/>
    </location>
</feature>
<feature type="region of interest" description="Disordered" evidence="3">
    <location>
        <begin position="944"/>
        <end position="1035"/>
    </location>
</feature>
<feature type="coiled-coil region" evidence="2">
    <location>
        <begin position="637"/>
        <end position="657"/>
    </location>
</feature>
<feature type="compositionally biased region" description="Acidic residues" evidence="3">
    <location>
        <begin position="949"/>
        <end position="985"/>
    </location>
</feature>
<feature type="compositionally biased region" description="Acidic residues" evidence="3">
    <location>
        <begin position="993"/>
        <end position="1002"/>
    </location>
</feature>
<feature type="compositionally biased region" description="Basic and acidic residues" evidence="3">
    <location>
        <begin position="1003"/>
        <end position="1027"/>
    </location>
</feature>
<dbReference type="EMBL" id="AE017343">
    <property type="protein sequence ID" value="AAW42200.1"/>
    <property type="molecule type" value="Genomic_DNA"/>
</dbReference>
<dbReference type="RefSeq" id="XP_569507.1">
    <property type="nucleotide sequence ID" value="XM_569507.1"/>
</dbReference>
<dbReference type="SMR" id="P0CQ22"/>
<dbReference type="FunCoup" id="P0CQ22">
    <property type="interactions" value="780"/>
</dbReference>
<dbReference type="STRING" id="214684.P0CQ22"/>
<dbReference type="PaxDb" id="214684-P0CQ22"/>
<dbReference type="EnsemblFungi" id="AAW42200">
    <property type="protein sequence ID" value="AAW42200"/>
    <property type="gene ID" value="CNC02310"/>
</dbReference>
<dbReference type="GeneID" id="3256484"/>
<dbReference type="KEGG" id="cne:CNC02310"/>
<dbReference type="VEuPathDB" id="FungiDB:CNC02310"/>
<dbReference type="eggNOG" id="KOG1189">
    <property type="taxonomic scope" value="Eukaryota"/>
</dbReference>
<dbReference type="HOGENOM" id="CLU_004627_1_0_1"/>
<dbReference type="InParanoid" id="P0CQ22"/>
<dbReference type="OMA" id="YHINTIP"/>
<dbReference type="OrthoDB" id="10251642at2759"/>
<dbReference type="Proteomes" id="UP000002149">
    <property type="component" value="Chromosome 3"/>
</dbReference>
<dbReference type="GO" id="GO:0035101">
    <property type="term" value="C:FACT complex"/>
    <property type="evidence" value="ECO:0000318"/>
    <property type="project" value="GO_Central"/>
</dbReference>
<dbReference type="GO" id="GO:0042393">
    <property type="term" value="F:histone binding"/>
    <property type="evidence" value="ECO:0007669"/>
    <property type="project" value="EnsemblFungi"/>
</dbReference>
<dbReference type="GO" id="GO:0140713">
    <property type="term" value="F:histone chaperone activity"/>
    <property type="evidence" value="ECO:0007669"/>
    <property type="project" value="EnsemblFungi"/>
</dbReference>
<dbReference type="GO" id="GO:0031491">
    <property type="term" value="F:nucleosome binding"/>
    <property type="evidence" value="ECO:0000318"/>
    <property type="project" value="GO_Central"/>
</dbReference>
<dbReference type="GO" id="GO:0140719">
    <property type="term" value="P:constitutive heterochromatin formation"/>
    <property type="evidence" value="ECO:0007669"/>
    <property type="project" value="EnsemblFungi"/>
</dbReference>
<dbReference type="GO" id="GO:0006281">
    <property type="term" value="P:DNA repair"/>
    <property type="evidence" value="ECO:0007669"/>
    <property type="project" value="UniProtKB-KW"/>
</dbReference>
<dbReference type="GO" id="GO:0006261">
    <property type="term" value="P:DNA-templated DNA replication"/>
    <property type="evidence" value="ECO:0007669"/>
    <property type="project" value="EnsemblFungi"/>
</dbReference>
<dbReference type="GO" id="GO:0006334">
    <property type="term" value="P:nucleosome assembly"/>
    <property type="evidence" value="ECO:0007669"/>
    <property type="project" value="EnsemblFungi"/>
</dbReference>
<dbReference type="GO" id="GO:0045899">
    <property type="term" value="P:positive regulation of RNA polymerase II transcription preinitiation complex assembly"/>
    <property type="evidence" value="ECO:0007669"/>
    <property type="project" value="EnsemblFungi"/>
</dbReference>
<dbReference type="GO" id="GO:0007063">
    <property type="term" value="P:regulation of sister chromatid cohesion"/>
    <property type="evidence" value="ECO:0007669"/>
    <property type="project" value="EnsemblFungi"/>
</dbReference>
<dbReference type="GO" id="GO:0006368">
    <property type="term" value="P:transcription elongation by RNA polymerase II"/>
    <property type="evidence" value="ECO:0000318"/>
    <property type="project" value="GO_Central"/>
</dbReference>
<dbReference type="FunFam" id="2.30.29.30:FF:000017">
    <property type="entry name" value="FACT complex subunit SPT16"/>
    <property type="match status" value="1"/>
</dbReference>
<dbReference type="FunFam" id="3.40.350.10:FF:000006">
    <property type="entry name" value="FACT complex subunit SPT16"/>
    <property type="match status" value="1"/>
</dbReference>
<dbReference type="FunFam" id="2.30.29.210:FF:000001">
    <property type="entry name" value="FACT complex subunit spt16"/>
    <property type="match status" value="1"/>
</dbReference>
<dbReference type="FunFam" id="3.90.230.10:FF:000005">
    <property type="entry name" value="FACT complex subunit spt16"/>
    <property type="match status" value="1"/>
</dbReference>
<dbReference type="Gene3D" id="2.30.29.150">
    <property type="match status" value="1"/>
</dbReference>
<dbReference type="Gene3D" id="3.90.230.10">
    <property type="entry name" value="Creatinase/methionine aminopeptidase superfamily"/>
    <property type="match status" value="1"/>
</dbReference>
<dbReference type="Gene3D" id="3.40.350.10">
    <property type="entry name" value="Creatinase/prolidase N-terminal domain"/>
    <property type="match status" value="1"/>
</dbReference>
<dbReference type="Gene3D" id="2.30.29.210">
    <property type="entry name" value="FACT complex subunit Spt16p/Cdc68p"/>
    <property type="match status" value="1"/>
</dbReference>
<dbReference type="Gene3D" id="2.30.29.30">
    <property type="entry name" value="Pleckstrin-homology domain (PH domain)/Phosphotyrosine-binding domain (PTB)"/>
    <property type="match status" value="1"/>
</dbReference>
<dbReference type="InterPro" id="IPR029149">
    <property type="entry name" value="Creatin/AminoP/Spt16_N"/>
</dbReference>
<dbReference type="InterPro" id="IPR036005">
    <property type="entry name" value="Creatinase/aminopeptidase-like"/>
</dbReference>
<dbReference type="InterPro" id="IPR029148">
    <property type="entry name" value="FACT-SPT16_Nlobe"/>
</dbReference>
<dbReference type="InterPro" id="IPR056595">
    <property type="entry name" value="Fact-SPT16_PH"/>
</dbReference>
<dbReference type="InterPro" id="IPR048969">
    <property type="entry name" value="FACT_SPT16_C"/>
</dbReference>
<dbReference type="InterPro" id="IPR013953">
    <property type="entry name" value="FACT_SPT16_M"/>
</dbReference>
<dbReference type="InterPro" id="IPR000994">
    <property type="entry name" value="Pept_M24"/>
</dbReference>
<dbReference type="InterPro" id="IPR011993">
    <property type="entry name" value="PH-like_dom_sf"/>
</dbReference>
<dbReference type="InterPro" id="IPR013719">
    <property type="entry name" value="RTT106/SPT16-like_middle_dom"/>
</dbReference>
<dbReference type="InterPro" id="IPR040258">
    <property type="entry name" value="Spt16"/>
</dbReference>
<dbReference type="PANTHER" id="PTHR13980">
    <property type="entry name" value="CDC68 RELATED"/>
    <property type="match status" value="1"/>
</dbReference>
<dbReference type="PANTHER" id="PTHR13980:SF15">
    <property type="entry name" value="FACT COMPLEX SUBUNIT SPT16"/>
    <property type="match status" value="1"/>
</dbReference>
<dbReference type="Pfam" id="PF14826">
    <property type="entry name" value="FACT-Spt16_Nlob"/>
    <property type="match status" value="1"/>
</dbReference>
<dbReference type="Pfam" id="PF00557">
    <property type="entry name" value="Peptidase_M24"/>
    <property type="match status" value="1"/>
</dbReference>
<dbReference type="Pfam" id="PF24824">
    <property type="entry name" value="PH_SPT16"/>
    <property type="match status" value="1"/>
</dbReference>
<dbReference type="Pfam" id="PF08512">
    <property type="entry name" value="Rttp106-like_middle"/>
    <property type="match status" value="1"/>
</dbReference>
<dbReference type="Pfam" id="PF08644">
    <property type="entry name" value="SPT16"/>
    <property type="match status" value="1"/>
</dbReference>
<dbReference type="Pfam" id="PF21091">
    <property type="entry name" value="SPT16_C"/>
    <property type="match status" value="1"/>
</dbReference>
<dbReference type="SMART" id="SM01285">
    <property type="entry name" value="FACT-Spt16_Nlob"/>
    <property type="match status" value="1"/>
</dbReference>
<dbReference type="SMART" id="SM01287">
    <property type="entry name" value="Rtt106"/>
    <property type="match status" value="1"/>
</dbReference>
<dbReference type="SMART" id="SM01286">
    <property type="entry name" value="SPT16"/>
    <property type="match status" value="1"/>
</dbReference>
<dbReference type="SUPFAM" id="SSF55920">
    <property type="entry name" value="Creatinase/aminopeptidase"/>
    <property type="match status" value="1"/>
</dbReference>
<name>SPT16_CRYNJ</name>